<reference key="1">
    <citation type="journal article" date="2007" name="J. Bacteriol.">
        <title>The complete genome sequence of Roseobacter denitrificans reveals a mixotrophic rather than photosynthetic metabolism.</title>
        <authorList>
            <person name="Swingley W.D."/>
            <person name="Sadekar S."/>
            <person name="Mastrian S.D."/>
            <person name="Matthies H.J."/>
            <person name="Hao J."/>
            <person name="Ramos H."/>
            <person name="Acharya C.R."/>
            <person name="Conrad A.L."/>
            <person name="Taylor H.L."/>
            <person name="Dejesa L.C."/>
            <person name="Shah M.K."/>
            <person name="O'Huallachain M.E."/>
            <person name="Lince M.T."/>
            <person name="Blankenship R.E."/>
            <person name="Beatty J.T."/>
            <person name="Touchman J.W."/>
        </authorList>
    </citation>
    <scope>NUCLEOTIDE SEQUENCE [LARGE SCALE GENOMIC DNA]</scope>
    <source>
        <strain>ATCC 33942 / OCh 114</strain>
    </source>
</reference>
<evidence type="ECO:0000255" key="1">
    <source>
        <dbReference type="HAMAP-Rule" id="MF_01325"/>
    </source>
</evidence>
<evidence type="ECO:0000256" key="2">
    <source>
        <dbReference type="SAM" id="MobiDB-lite"/>
    </source>
</evidence>
<evidence type="ECO:0000305" key="3"/>
<feature type="chain" id="PRO_1000052129" description="Large ribosomal subunit protein uL3">
    <location>
        <begin position="1"/>
        <end position="286"/>
    </location>
</feature>
<feature type="region of interest" description="Disordered" evidence="2">
    <location>
        <begin position="246"/>
        <end position="286"/>
    </location>
</feature>
<feature type="compositionally biased region" description="Low complexity" evidence="2">
    <location>
        <begin position="246"/>
        <end position="265"/>
    </location>
</feature>
<feature type="compositionally biased region" description="Basic and acidic residues" evidence="2">
    <location>
        <begin position="266"/>
        <end position="286"/>
    </location>
</feature>
<feature type="modified residue" description="N5-methylglutamine" evidence="1">
    <location>
        <position position="152"/>
    </location>
</feature>
<sequence>MLRSGVIAKKVGMTRLFMEDGKQIPVTVLQLDKLQVVAQRTSEKDGYSAVQLGAGTAKAKRTSQAMRGHFAAAKVEPKRKVAEFRVDPENLIGVGEEITANHYFEGQFVDVAGTSIGKGFAGAMKRHNFGGLRASHGVSISHRSHGSTGQCQDPGKVFKGKKMAGHMGAARVTTQNLQVVRTDANRGLIMVKGAVPGSKGGWVTVKDAVKKPFPENAILPAALKSAAEEAEKAAEAAAAAAAAEAEAAAAAAAAEEQAAMEAAEAAEAKTDTVAEAEAAEKKEGDA</sequence>
<proteinExistence type="inferred from homology"/>
<keyword id="KW-0488">Methylation</keyword>
<keyword id="KW-1185">Reference proteome</keyword>
<keyword id="KW-0687">Ribonucleoprotein</keyword>
<keyword id="KW-0689">Ribosomal protein</keyword>
<keyword id="KW-0694">RNA-binding</keyword>
<keyword id="KW-0699">rRNA-binding</keyword>
<organism>
    <name type="scientific">Roseobacter denitrificans (strain ATCC 33942 / OCh 114)</name>
    <name type="common">Erythrobacter sp. (strain OCh 114)</name>
    <name type="synonym">Roseobacter denitrificans</name>
    <dbReference type="NCBI Taxonomy" id="375451"/>
    <lineage>
        <taxon>Bacteria</taxon>
        <taxon>Pseudomonadati</taxon>
        <taxon>Pseudomonadota</taxon>
        <taxon>Alphaproteobacteria</taxon>
        <taxon>Rhodobacterales</taxon>
        <taxon>Roseobacteraceae</taxon>
        <taxon>Roseobacter</taxon>
    </lineage>
</organism>
<accession>Q16AF4</accession>
<protein>
    <recommendedName>
        <fullName evidence="1">Large ribosomal subunit protein uL3</fullName>
    </recommendedName>
    <alternativeName>
        <fullName evidence="3">50S ribosomal protein L3</fullName>
    </alternativeName>
</protein>
<gene>
    <name evidence="1" type="primary">rplC</name>
    <name type="ordered locus">RD1_1399</name>
</gene>
<name>RL3_ROSDO</name>
<dbReference type="EMBL" id="CP000362">
    <property type="protein sequence ID" value="ABG31039.1"/>
    <property type="molecule type" value="Genomic_DNA"/>
</dbReference>
<dbReference type="RefSeq" id="WP_011567659.1">
    <property type="nucleotide sequence ID" value="NC_008209.1"/>
</dbReference>
<dbReference type="SMR" id="Q16AF4"/>
<dbReference type="STRING" id="375451.RD1_1399"/>
<dbReference type="KEGG" id="rde:RD1_1399"/>
<dbReference type="eggNOG" id="COG0087">
    <property type="taxonomic scope" value="Bacteria"/>
</dbReference>
<dbReference type="HOGENOM" id="CLU_044142_2_0_5"/>
<dbReference type="OrthoDB" id="9806135at2"/>
<dbReference type="Proteomes" id="UP000007029">
    <property type="component" value="Chromosome"/>
</dbReference>
<dbReference type="GO" id="GO:0022625">
    <property type="term" value="C:cytosolic large ribosomal subunit"/>
    <property type="evidence" value="ECO:0007669"/>
    <property type="project" value="TreeGrafter"/>
</dbReference>
<dbReference type="GO" id="GO:0019843">
    <property type="term" value="F:rRNA binding"/>
    <property type="evidence" value="ECO:0007669"/>
    <property type="project" value="UniProtKB-UniRule"/>
</dbReference>
<dbReference type="GO" id="GO:0003735">
    <property type="term" value="F:structural constituent of ribosome"/>
    <property type="evidence" value="ECO:0007669"/>
    <property type="project" value="InterPro"/>
</dbReference>
<dbReference type="GO" id="GO:0006412">
    <property type="term" value="P:translation"/>
    <property type="evidence" value="ECO:0007669"/>
    <property type="project" value="UniProtKB-UniRule"/>
</dbReference>
<dbReference type="FunFam" id="2.40.30.10:FF:000004">
    <property type="entry name" value="50S ribosomal protein L3"/>
    <property type="match status" value="1"/>
</dbReference>
<dbReference type="FunFam" id="3.30.160.810:FF:000001">
    <property type="entry name" value="50S ribosomal protein L3"/>
    <property type="match status" value="1"/>
</dbReference>
<dbReference type="Gene3D" id="3.30.160.810">
    <property type="match status" value="1"/>
</dbReference>
<dbReference type="Gene3D" id="2.40.30.10">
    <property type="entry name" value="Translation factors"/>
    <property type="match status" value="1"/>
</dbReference>
<dbReference type="HAMAP" id="MF_01325_B">
    <property type="entry name" value="Ribosomal_uL3_B"/>
    <property type="match status" value="1"/>
</dbReference>
<dbReference type="InterPro" id="IPR000597">
    <property type="entry name" value="Ribosomal_uL3"/>
</dbReference>
<dbReference type="InterPro" id="IPR019927">
    <property type="entry name" value="Ribosomal_uL3_bac/org-type"/>
</dbReference>
<dbReference type="InterPro" id="IPR009000">
    <property type="entry name" value="Transl_B-barrel_sf"/>
</dbReference>
<dbReference type="NCBIfam" id="TIGR03625">
    <property type="entry name" value="L3_bact"/>
    <property type="match status" value="1"/>
</dbReference>
<dbReference type="PANTHER" id="PTHR11229">
    <property type="entry name" value="50S RIBOSOMAL PROTEIN L3"/>
    <property type="match status" value="1"/>
</dbReference>
<dbReference type="PANTHER" id="PTHR11229:SF16">
    <property type="entry name" value="LARGE RIBOSOMAL SUBUNIT PROTEIN UL3C"/>
    <property type="match status" value="1"/>
</dbReference>
<dbReference type="Pfam" id="PF00297">
    <property type="entry name" value="Ribosomal_L3"/>
    <property type="match status" value="1"/>
</dbReference>
<dbReference type="SUPFAM" id="SSF50447">
    <property type="entry name" value="Translation proteins"/>
    <property type="match status" value="1"/>
</dbReference>
<comment type="function">
    <text evidence="1">One of the primary rRNA binding proteins, it binds directly near the 3'-end of the 23S rRNA, where it nucleates assembly of the 50S subunit.</text>
</comment>
<comment type="subunit">
    <text evidence="1">Part of the 50S ribosomal subunit. Forms a cluster with proteins L14 and L19.</text>
</comment>
<comment type="PTM">
    <text evidence="1">Methylated by PrmB.</text>
</comment>
<comment type="similarity">
    <text evidence="1">Belongs to the universal ribosomal protein uL3 family.</text>
</comment>